<dbReference type="EC" id="2.3.1.286" evidence="1"/>
<dbReference type="EMBL" id="AL935263">
    <property type="protein sequence ID" value="CCC77954.1"/>
    <property type="molecule type" value="Genomic_DNA"/>
</dbReference>
<dbReference type="RefSeq" id="WP_003646490.1">
    <property type="nucleotide sequence ID" value="NC_004567.2"/>
</dbReference>
<dbReference type="RefSeq" id="YP_004888468.1">
    <property type="nucleotide sequence ID" value="NC_004567.2"/>
</dbReference>
<dbReference type="SMR" id="Q88ZA0"/>
<dbReference type="STRING" id="220668.lp_0449"/>
<dbReference type="EnsemblBacteria" id="CCC77954">
    <property type="protein sequence ID" value="CCC77954"/>
    <property type="gene ID" value="lp_0449"/>
</dbReference>
<dbReference type="KEGG" id="lpl:lp_0449"/>
<dbReference type="PATRIC" id="fig|220668.9.peg.369"/>
<dbReference type="eggNOG" id="COG0846">
    <property type="taxonomic scope" value="Bacteria"/>
</dbReference>
<dbReference type="HOGENOM" id="CLU_023643_3_0_9"/>
<dbReference type="OrthoDB" id="9800582at2"/>
<dbReference type="PhylomeDB" id="Q88ZA0"/>
<dbReference type="Proteomes" id="UP000000432">
    <property type="component" value="Chromosome"/>
</dbReference>
<dbReference type="GO" id="GO:0005737">
    <property type="term" value="C:cytoplasm"/>
    <property type="evidence" value="ECO:0007669"/>
    <property type="project" value="UniProtKB-SubCell"/>
</dbReference>
<dbReference type="GO" id="GO:0017136">
    <property type="term" value="F:histone deacetylase activity, NAD-dependent"/>
    <property type="evidence" value="ECO:0007669"/>
    <property type="project" value="TreeGrafter"/>
</dbReference>
<dbReference type="GO" id="GO:0070403">
    <property type="term" value="F:NAD+ binding"/>
    <property type="evidence" value="ECO:0007669"/>
    <property type="project" value="UniProtKB-UniRule"/>
</dbReference>
<dbReference type="CDD" id="cd01411">
    <property type="entry name" value="SIR2H"/>
    <property type="match status" value="1"/>
</dbReference>
<dbReference type="Gene3D" id="3.30.1600.10">
    <property type="entry name" value="SIR2/SIRT2 'Small Domain"/>
    <property type="match status" value="1"/>
</dbReference>
<dbReference type="Gene3D" id="3.40.50.1220">
    <property type="entry name" value="TPP-binding domain"/>
    <property type="match status" value="1"/>
</dbReference>
<dbReference type="HAMAP" id="MF_01968">
    <property type="entry name" value="Sirtuin_ClassU"/>
    <property type="match status" value="1"/>
</dbReference>
<dbReference type="InterPro" id="IPR029035">
    <property type="entry name" value="DHS-like_NAD/FAD-binding_dom"/>
</dbReference>
<dbReference type="InterPro" id="IPR050134">
    <property type="entry name" value="NAD-dep_sirtuin_deacylases"/>
</dbReference>
<dbReference type="InterPro" id="IPR003000">
    <property type="entry name" value="Sirtuin"/>
</dbReference>
<dbReference type="InterPro" id="IPR026591">
    <property type="entry name" value="Sirtuin_cat_small_dom_sf"/>
</dbReference>
<dbReference type="InterPro" id="IPR028628">
    <property type="entry name" value="Sirtuin_class_U"/>
</dbReference>
<dbReference type="InterPro" id="IPR026590">
    <property type="entry name" value="Ssirtuin_cat_dom"/>
</dbReference>
<dbReference type="NCBIfam" id="NF001752">
    <property type="entry name" value="PRK00481.1-1"/>
    <property type="match status" value="1"/>
</dbReference>
<dbReference type="PANTHER" id="PTHR11085:SF4">
    <property type="entry name" value="NAD-DEPENDENT PROTEIN DEACYLASE"/>
    <property type="match status" value="1"/>
</dbReference>
<dbReference type="PANTHER" id="PTHR11085">
    <property type="entry name" value="NAD-DEPENDENT PROTEIN DEACYLASE SIRTUIN-5, MITOCHONDRIAL-RELATED"/>
    <property type="match status" value="1"/>
</dbReference>
<dbReference type="Pfam" id="PF02146">
    <property type="entry name" value="SIR2"/>
    <property type="match status" value="1"/>
</dbReference>
<dbReference type="SUPFAM" id="SSF52467">
    <property type="entry name" value="DHS-like NAD/FAD-binding domain"/>
    <property type="match status" value="1"/>
</dbReference>
<dbReference type="PROSITE" id="PS50305">
    <property type="entry name" value="SIRTUIN"/>
    <property type="match status" value="1"/>
</dbReference>
<feature type="chain" id="PRO_0000110322" description="NAD-dependent protein deacetylase">
    <location>
        <begin position="1"/>
        <end position="234"/>
    </location>
</feature>
<feature type="domain" description="Deacetylase sirtuin-type" evidence="2">
    <location>
        <begin position="1"/>
        <end position="234"/>
    </location>
</feature>
<feature type="active site" description="Proton acceptor" evidence="1">
    <location>
        <position position="117"/>
    </location>
</feature>
<feature type="binding site" evidence="1">
    <location>
        <position position="23"/>
    </location>
    <ligand>
        <name>NAD(+)</name>
        <dbReference type="ChEBI" id="CHEBI:57540"/>
    </ligand>
</feature>
<feature type="binding site" evidence="1">
    <location>
        <position position="27"/>
    </location>
    <ligand>
        <name>NAD(+)</name>
        <dbReference type="ChEBI" id="CHEBI:57540"/>
    </ligand>
</feature>
<feature type="binding site" evidence="1">
    <location>
        <position position="35"/>
    </location>
    <ligand>
        <name>NAD(+)</name>
        <dbReference type="ChEBI" id="CHEBI:57540"/>
    </ligand>
</feature>
<feature type="binding site" evidence="1">
    <location>
        <position position="99"/>
    </location>
    <ligand>
        <name>NAD(+)</name>
        <dbReference type="ChEBI" id="CHEBI:57540"/>
    </ligand>
</feature>
<feature type="binding site" evidence="1">
    <location>
        <position position="101"/>
    </location>
    <ligand>
        <name>NAD(+)</name>
        <dbReference type="ChEBI" id="CHEBI:57540"/>
    </ligand>
</feature>
<feature type="binding site" evidence="1">
    <location>
        <position position="101"/>
    </location>
    <ligand>
        <name>nicotinamide</name>
        <dbReference type="ChEBI" id="CHEBI:17154"/>
    </ligand>
</feature>
<feature type="binding site" evidence="1">
    <location>
        <position position="102"/>
    </location>
    <ligand>
        <name>NAD(+)</name>
        <dbReference type="ChEBI" id="CHEBI:57540"/>
    </ligand>
</feature>
<feature type="binding site" evidence="1">
    <location>
        <position position="102"/>
    </location>
    <ligand>
        <name>nicotinamide</name>
        <dbReference type="ChEBI" id="CHEBI:17154"/>
    </ligand>
</feature>
<feature type="binding site" evidence="1">
    <location>
        <position position="117"/>
    </location>
    <ligand>
        <name>NAD(+)</name>
        <dbReference type="ChEBI" id="CHEBI:57540"/>
    </ligand>
</feature>
<feature type="binding site" evidence="1">
    <location>
        <position position="184"/>
    </location>
    <ligand>
        <name>NAD(+)</name>
        <dbReference type="ChEBI" id="CHEBI:57540"/>
    </ligand>
</feature>
<feature type="binding site" evidence="1">
    <location>
        <position position="185"/>
    </location>
    <ligand>
        <name>NAD(+)</name>
        <dbReference type="ChEBI" id="CHEBI:57540"/>
    </ligand>
</feature>
<feature type="binding site" evidence="1">
    <location>
        <position position="208"/>
    </location>
    <ligand>
        <name>NAD(+)</name>
        <dbReference type="ChEBI" id="CHEBI:57540"/>
    </ligand>
</feature>
<feature type="binding site" evidence="1">
    <location>
        <position position="226"/>
    </location>
    <ligand>
        <name>NAD(+)</name>
        <dbReference type="ChEBI" id="CHEBI:57540"/>
    </ligand>
</feature>
<name>NPD_LACPL</name>
<keyword id="KW-0963">Cytoplasm</keyword>
<keyword id="KW-0520">NAD</keyword>
<keyword id="KW-1185">Reference proteome</keyword>
<keyword id="KW-0808">Transferase</keyword>
<evidence type="ECO:0000255" key="1">
    <source>
        <dbReference type="HAMAP-Rule" id="MF_01968"/>
    </source>
</evidence>
<evidence type="ECO:0000255" key="2">
    <source>
        <dbReference type="PROSITE-ProRule" id="PRU00236"/>
    </source>
</evidence>
<protein>
    <recommendedName>
        <fullName evidence="1">NAD-dependent protein deacetylase</fullName>
        <ecNumber evidence="1">2.3.1.286</ecNumber>
    </recommendedName>
    <alternativeName>
        <fullName evidence="1">Regulatory protein SIR2 homolog</fullName>
    </alternativeName>
</protein>
<comment type="function">
    <text evidence="1">NAD-dependent protein deacetylase which modulates the activities of several enzymes which are inactive in their acetylated form.</text>
</comment>
<comment type="catalytic activity">
    <reaction evidence="1">
        <text>N(6)-acetyl-L-lysyl-[protein] + NAD(+) + H2O = 2''-O-acetyl-ADP-D-ribose + nicotinamide + L-lysyl-[protein]</text>
        <dbReference type="Rhea" id="RHEA:43636"/>
        <dbReference type="Rhea" id="RHEA-COMP:9752"/>
        <dbReference type="Rhea" id="RHEA-COMP:10731"/>
        <dbReference type="ChEBI" id="CHEBI:15377"/>
        <dbReference type="ChEBI" id="CHEBI:17154"/>
        <dbReference type="ChEBI" id="CHEBI:29969"/>
        <dbReference type="ChEBI" id="CHEBI:57540"/>
        <dbReference type="ChEBI" id="CHEBI:61930"/>
        <dbReference type="ChEBI" id="CHEBI:83767"/>
        <dbReference type="EC" id="2.3.1.286"/>
    </reaction>
</comment>
<comment type="subcellular location">
    <subcellularLocation>
        <location evidence="1">Cytoplasm</location>
    </subcellularLocation>
</comment>
<comment type="similarity">
    <text evidence="1">Belongs to the sirtuin family. Class U subfamily.</text>
</comment>
<sequence>MSDITAAQTTLQQAQHIVFMTGAGVSTPSGIPDYRSKNGLYTEHHNAEYYLSHAFLAEHPLEFYQYLQSNLYYPDAQPNVIHQKMAALTQQGRASVITQNIDNLYGVAKTAQLVEFHGNLYQVYCTKCGQHVDWHEYLKSPYHQTDHGYLRPNVVLYDEGIASANIERAVQYLQQADLVVICGTSFRVYPFAGLIDYRNPKAQVLAINAEPLQLPFAFTMVQQDAVDFFEGVQV</sequence>
<gene>
    <name evidence="1" type="primary">cobB</name>
    <name type="ordered locus">lp_0449</name>
</gene>
<organism>
    <name type="scientific">Lactiplantibacillus plantarum (strain ATCC BAA-793 / NCIMB 8826 / WCFS1)</name>
    <name type="common">Lactobacillus plantarum</name>
    <dbReference type="NCBI Taxonomy" id="220668"/>
    <lineage>
        <taxon>Bacteria</taxon>
        <taxon>Bacillati</taxon>
        <taxon>Bacillota</taxon>
        <taxon>Bacilli</taxon>
        <taxon>Lactobacillales</taxon>
        <taxon>Lactobacillaceae</taxon>
        <taxon>Lactiplantibacillus</taxon>
    </lineage>
</organism>
<proteinExistence type="inferred from homology"/>
<reference key="1">
    <citation type="journal article" date="2003" name="Proc. Natl. Acad. Sci. U.S.A.">
        <title>Complete genome sequence of Lactobacillus plantarum WCFS1.</title>
        <authorList>
            <person name="Kleerebezem M."/>
            <person name="Boekhorst J."/>
            <person name="van Kranenburg R."/>
            <person name="Molenaar D."/>
            <person name="Kuipers O.P."/>
            <person name="Leer R."/>
            <person name="Tarchini R."/>
            <person name="Peters S.A."/>
            <person name="Sandbrink H.M."/>
            <person name="Fiers M.W.E.J."/>
            <person name="Stiekema W."/>
            <person name="Klein Lankhorst R.M."/>
            <person name="Bron P.A."/>
            <person name="Hoffer S.M."/>
            <person name="Nierop Groot M.N."/>
            <person name="Kerkhoven R."/>
            <person name="De Vries M."/>
            <person name="Ursing B."/>
            <person name="De Vos W.M."/>
            <person name="Siezen R.J."/>
        </authorList>
    </citation>
    <scope>NUCLEOTIDE SEQUENCE [LARGE SCALE GENOMIC DNA]</scope>
    <source>
        <strain>ATCC BAA-793 / NCIMB 8826 / WCFS1</strain>
    </source>
</reference>
<reference key="2">
    <citation type="journal article" date="2012" name="J. Bacteriol.">
        <title>Complete resequencing and reannotation of the Lactobacillus plantarum WCFS1 genome.</title>
        <authorList>
            <person name="Siezen R.J."/>
            <person name="Francke C."/>
            <person name="Renckens B."/>
            <person name="Boekhorst J."/>
            <person name="Wels M."/>
            <person name="Kleerebezem M."/>
            <person name="van Hijum S.A."/>
        </authorList>
    </citation>
    <scope>NUCLEOTIDE SEQUENCE [LARGE SCALE GENOMIC DNA]</scope>
    <scope>GENOME REANNOTATION</scope>
    <source>
        <strain>ATCC BAA-793 / NCIMB 8826 / WCFS1</strain>
    </source>
</reference>
<accession>Q88ZA0</accession>
<accession>F9UU34</accession>